<comment type="function">
    <text evidence="1">Bidirectionally degrades single-stranded DNA into large acid-insoluble oligonucleotides, which are then degraded further into small acid-soluble oligonucleotides.</text>
</comment>
<comment type="catalytic activity">
    <reaction evidence="1">
        <text>Exonucleolytic cleavage in either 5'- to 3'- or 3'- to 5'-direction to yield nucleoside 5'-phosphates.</text>
        <dbReference type="EC" id="3.1.11.6"/>
    </reaction>
</comment>
<comment type="subunit">
    <text evidence="1">Heterooligomer composed of large and small subunits.</text>
</comment>
<comment type="subcellular location">
    <subcellularLocation>
        <location evidence="1">Cytoplasm</location>
    </subcellularLocation>
</comment>
<comment type="similarity">
    <text evidence="1">Belongs to the XseB family.</text>
</comment>
<comment type="sequence caution" evidence="2">
    <conflict type="erroneous initiation">
        <sequence resource="EMBL-CDS" id="AAN29374"/>
    </conflict>
</comment>
<comment type="sequence caution" evidence="2">
    <conflict type="erroneous initiation">
        <sequence resource="EMBL-CDS" id="AEM17787"/>
    </conflict>
    <text>Extended N-terminus.</text>
</comment>
<sequence>MTEPSNADIAVMSFEDALKQLEKIVDDLERGDVPLEESIRIYERGEALKKHCDTLLKSAEDKVEKIRIGRDGQPVGTEPLDPE</sequence>
<gene>
    <name evidence="1" type="primary">xseB</name>
    <name type="ordered locus">BR0431</name>
    <name type="ordered locus">BS1330_I0432</name>
</gene>
<reference key="1">
    <citation type="journal article" date="2002" name="Proc. Natl. Acad. Sci. U.S.A.">
        <title>The Brucella suis genome reveals fundamental similarities between animal and plant pathogens and symbionts.</title>
        <authorList>
            <person name="Paulsen I.T."/>
            <person name="Seshadri R."/>
            <person name="Nelson K.E."/>
            <person name="Eisen J.A."/>
            <person name="Heidelberg J.F."/>
            <person name="Read T.D."/>
            <person name="Dodson R.J."/>
            <person name="Umayam L.A."/>
            <person name="Brinkac L.M."/>
            <person name="Beanan M.J."/>
            <person name="Daugherty S.C."/>
            <person name="DeBoy R.T."/>
            <person name="Durkin A.S."/>
            <person name="Kolonay J.F."/>
            <person name="Madupu R."/>
            <person name="Nelson W.C."/>
            <person name="Ayodeji B."/>
            <person name="Kraul M."/>
            <person name="Shetty J."/>
            <person name="Malek J.A."/>
            <person name="Van Aken S.E."/>
            <person name="Riedmuller S."/>
            <person name="Tettelin H."/>
            <person name="Gill S.R."/>
            <person name="White O."/>
            <person name="Salzberg S.L."/>
            <person name="Hoover D.L."/>
            <person name="Lindler L.E."/>
            <person name="Halling S.M."/>
            <person name="Boyle S.M."/>
            <person name="Fraser C.M."/>
        </authorList>
    </citation>
    <scope>NUCLEOTIDE SEQUENCE [LARGE SCALE GENOMIC DNA]</scope>
    <source>
        <strain>1330</strain>
    </source>
</reference>
<reference key="2">
    <citation type="journal article" date="2011" name="J. Bacteriol.">
        <title>Revised genome sequence of Brucella suis 1330.</title>
        <authorList>
            <person name="Tae H."/>
            <person name="Shallom S."/>
            <person name="Settlage R."/>
            <person name="Preston D."/>
            <person name="Adams L.G."/>
            <person name="Garner H.R."/>
        </authorList>
    </citation>
    <scope>NUCLEOTIDE SEQUENCE [LARGE SCALE GENOMIC DNA]</scope>
    <source>
        <strain>1330</strain>
    </source>
</reference>
<name>EX7S_BRUSU</name>
<dbReference type="EC" id="3.1.11.6" evidence="1"/>
<dbReference type="EMBL" id="AE014291">
    <property type="protein sequence ID" value="AAN29374.1"/>
    <property type="status" value="ALT_INIT"/>
    <property type="molecule type" value="Genomic_DNA"/>
</dbReference>
<dbReference type="EMBL" id="CP002997">
    <property type="protein sequence ID" value="AEM17787.1"/>
    <property type="status" value="ALT_INIT"/>
    <property type="molecule type" value="Genomic_DNA"/>
</dbReference>
<dbReference type="SMR" id="P67455"/>
<dbReference type="KEGG" id="bms:BR0431"/>
<dbReference type="KEGG" id="bsi:BS1330_I0432"/>
<dbReference type="HOGENOM" id="CLU_145918_0_3_5"/>
<dbReference type="Proteomes" id="UP000007104">
    <property type="component" value="Chromosome I"/>
</dbReference>
<dbReference type="GO" id="GO:0005829">
    <property type="term" value="C:cytosol"/>
    <property type="evidence" value="ECO:0007669"/>
    <property type="project" value="TreeGrafter"/>
</dbReference>
<dbReference type="GO" id="GO:0009318">
    <property type="term" value="C:exodeoxyribonuclease VII complex"/>
    <property type="evidence" value="ECO:0007669"/>
    <property type="project" value="InterPro"/>
</dbReference>
<dbReference type="GO" id="GO:0008855">
    <property type="term" value="F:exodeoxyribonuclease VII activity"/>
    <property type="evidence" value="ECO:0007669"/>
    <property type="project" value="UniProtKB-UniRule"/>
</dbReference>
<dbReference type="GO" id="GO:0006308">
    <property type="term" value="P:DNA catabolic process"/>
    <property type="evidence" value="ECO:0007669"/>
    <property type="project" value="UniProtKB-UniRule"/>
</dbReference>
<dbReference type="Gene3D" id="1.10.287.1040">
    <property type="entry name" value="Exonuclease VII, small subunit"/>
    <property type="match status" value="1"/>
</dbReference>
<dbReference type="HAMAP" id="MF_00337">
    <property type="entry name" value="Exonuc_7_S"/>
    <property type="match status" value="1"/>
</dbReference>
<dbReference type="InterPro" id="IPR003761">
    <property type="entry name" value="Exonuc_VII_S"/>
</dbReference>
<dbReference type="InterPro" id="IPR037004">
    <property type="entry name" value="Exonuc_VII_ssu_sf"/>
</dbReference>
<dbReference type="NCBIfam" id="NF002139">
    <property type="entry name" value="PRK00977.1-3"/>
    <property type="match status" value="1"/>
</dbReference>
<dbReference type="NCBIfam" id="TIGR01280">
    <property type="entry name" value="xseB"/>
    <property type="match status" value="1"/>
</dbReference>
<dbReference type="PANTHER" id="PTHR34137">
    <property type="entry name" value="EXODEOXYRIBONUCLEASE 7 SMALL SUBUNIT"/>
    <property type="match status" value="1"/>
</dbReference>
<dbReference type="PANTHER" id="PTHR34137:SF1">
    <property type="entry name" value="EXODEOXYRIBONUCLEASE 7 SMALL SUBUNIT"/>
    <property type="match status" value="1"/>
</dbReference>
<dbReference type="Pfam" id="PF02609">
    <property type="entry name" value="Exonuc_VII_S"/>
    <property type="match status" value="1"/>
</dbReference>
<dbReference type="SUPFAM" id="SSF116842">
    <property type="entry name" value="XseB-like"/>
    <property type="match status" value="1"/>
</dbReference>
<protein>
    <recommendedName>
        <fullName evidence="1">Exodeoxyribonuclease 7 small subunit</fullName>
        <ecNumber evidence="1">3.1.11.6</ecNumber>
    </recommendedName>
    <alternativeName>
        <fullName evidence="1">Exodeoxyribonuclease VII small subunit</fullName>
        <shortName evidence="1">Exonuclease VII small subunit</shortName>
    </alternativeName>
</protein>
<accession>P67455</accession>
<accession>G0K6Q0</accession>
<accession>Q8YFL7</accession>
<keyword id="KW-0963">Cytoplasm</keyword>
<keyword id="KW-0269">Exonuclease</keyword>
<keyword id="KW-0378">Hydrolase</keyword>
<keyword id="KW-0540">Nuclease</keyword>
<feature type="chain" id="PRO_0000206930" description="Exodeoxyribonuclease 7 small subunit">
    <location>
        <begin position="1"/>
        <end position="83"/>
    </location>
</feature>
<proteinExistence type="inferred from homology"/>
<evidence type="ECO:0000255" key="1">
    <source>
        <dbReference type="HAMAP-Rule" id="MF_00337"/>
    </source>
</evidence>
<evidence type="ECO:0000305" key="2"/>
<organism>
    <name type="scientific">Brucella suis biovar 1 (strain 1330)</name>
    <dbReference type="NCBI Taxonomy" id="204722"/>
    <lineage>
        <taxon>Bacteria</taxon>
        <taxon>Pseudomonadati</taxon>
        <taxon>Pseudomonadota</taxon>
        <taxon>Alphaproteobacteria</taxon>
        <taxon>Hyphomicrobiales</taxon>
        <taxon>Brucellaceae</taxon>
        <taxon>Brucella/Ochrobactrum group</taxon>
        <taxon>Brucella</taxon>
    </lineage>
</organism>